<reference key="1">
    <citation type="journal article" date="1996" name="Plant Mol. Biol.">
        <title>Primary structure and expression of plant homologues of animal and fungal thioredoxin-dependent peroxide reductases and bacterial alkyl hydroperoxide reductases.</title>
        <authorList>
            <person name="Baier M."/>
            <person name="Dietz K.-J."/>
        </authorList>
    </citation>
    <scope>NUCLEOTIDE SEQUENCE [MRNA]</scope>
    <source>
        <strain>cv. Gerbel</strain>
        <tissue>Leaf</tissue>
    </source>
</reference>
<protein>
    <recommendedName>
        <fullName>2-Cys peroxiredoxin BAS1, chloroplastic</fullName>
        <ecNumber evidence="3">1.11.1.24</ecNumber>
    </recommendedName>
    <alternativeName>
        <fullName>Thiol-specific antioxidant protein</fullName>
    </alternativeName>
    <alternativeName>
        <fullName evidence="5">Thioredoxin-dependent peroxiredoxin BAS1</fullName>
    </alternativeName>
</protein>
<gene>
    <name type="primary">BAS1</name>
</gene>
<accession>Q96468</accession>
<comment type="function">
    <text evidence="3">Thiol-specific peroxidase that catalyzes the reduction of hydrogen peroxide and organic hydroperoxides to water and alcohols, respectively. Plays a role in cell protection against oxidative stress by detoxifying peroxides. May be an antioxidant enzyme particularly in the developing shoot and photosynthesizing leaf.</text>
</comment>
<comment type="catalytic activity">
    <reaction evidence="3">
        <text>a hydroperoxide + [thioredoxin]-dithiol = an alcohol + [thioredoxin]-disulfide + H2O</text>
        <dbReference type="Rhea" id="RHEA:62620"/>
        <dbReference type="Rhea" id="RHEA-COMP:10698"/>
        <dbReference type="Rhea" id="RHEA-COMP:10700"/>
        <dbReference type="ChEBI" id="CHEBI:15377"/>
        <dbReference type="ChEBI" id="CHEBI:29950"/>
        <dbReference type="ChEBI" id="CHEBI:30879"/>
        <dbReference type="ChEBI" id="CHEBI:35924"/>
        <dbReference type="ChEBI" id="CHEBI:50058"/>
        <dbReference type="EC" id="1.11.1.24"/>
    </reaction>
</comment>
<comment type="subunit">
    <text evidence="2">Homodimer; disulfide-linked, upon oxidation.</text>
</comment>
<comment type="subcellular location">
    <subcellularLocation>
        <location evidence="3">Plastid</location>
        <location evidence="3">Chloroplast</location>
    </subcellularLocation>
</comment>
<comment type="tissue specificity">
    <text>Expressed in leaf blade, sheath, basiplast, stem and green spike. Maximal expression in young developing shoots segments where cell division and elongation take place. Not expressed in roots.</text>
</comment>
<comment type="developmental stage">
    <text>Maximal levels are seen in 4-day old seedlings and decline during aging of the seedling.</text>
</comment>
<comment type="miscellaneous">
    <text evidence="3">The active site is a conserved redox-active cysteine residue, the peroxidatic cysteine (C(P)), which makes the nucleophilic attack on the peroxide substrate. The peroxide oxidizes the C(P)-SH to cysteine sulfenic acid (C(P)-SOH), which then reacts with another cysteine residue, the resolving cysteine (C(R)), to form a disulfide bridge. The disulfide is subsequently reduced by an appropriate electron donor to complete the catalytic cycle. In this typical 2-Cys peroxiredoxin, C(R) is provided by the other dimeric subunit to form an intersubunit disulfide. The disulfide is subsequently reduced by thioredoxin.</text>
</comment>
<comment type="similarity">
    <text evidence="5">Belongs to the peroxiredoxin family. AhpC/Prx1 subfamily.</text>
</comment>
<keyword id="KW-0049">Antioxidant</keyword>
<keyword id="KW-0150">Chloroplast</keyword>
<keyword id="KW-1015">Disulfide bond</keyword>
<keyword id="KW-0560">Oxidoreductase</keyword>
<keyword id="KW-0575">Peroxidase</keyword>
<keyword id="KW-0934">Plastid</keyword>
<keyword id="KW-0676">Redox-active center</keyword>
<keyword id="KW-0809">Transit peptide</keyword>
<feature type="transit peptide" description="Chloroplast" evidence="1">
    <location>
        <begin position="1" status="less than"/>
        <end position="10"/>
    </location>
</feature>
<feature type="chain" id="PRO_0000023785" description="2-Cys peroxiredoxin BAS1, chloroplastic">
    <location>
        <begin position="11"/>
        <end position="210"/>
    </location>
</feature>
<feature type="domain" description="Thioredoxin" evidence="4">
    <location>
        <begin position="18"/>
        <end position="177"/>
    </location>
</feature>
<feature type="active site" description="Cysteine sulfenic acid (-SOH) intermediate" evidence="2">
    <location>
        <position position="64"/>
    </location>
</feature>
<feature type="disulfide bond" description="Interchain (with C-185); in linked form" evidence="2">
    <location>
        <position position="64"/>
    </location>
</feature>
<feature type="disulfide bond" description="Interchain (with C-64); in linked form" evidence="2">
    <location>
        <position position="185"/>
    </location>
</feature>
<feature type="non-terminal residue">
    <location>
        <position position="1"/>
    </location>
</feature>
<evidence type="ECO:0000250" key="1"/>
<evidence type="ECO:0000250" key="2">
    <source>
        <dbReference type="UniProtKB" id="Q06830"/>
    </source>
</evidence>
<evidence type="ECO:0000250" key="3">
    <source>
        <dbReference type="UniProtKB" id="Q96291"/>
    </source>
</evidence>
<evidence type="ECO:0000255" key="4">
    <source>
        <dbReference type="PROSITE-ProRule" id="PRU00691"/>
    </source>
</evidence>
<evidence type="ECO:0000305" key="5"/>
<organism>
    <name type="scientific">Hordeum vulgare</name>
    <name type="common">Barley</name>
    <dbReference type="NCBI Taxonomy" id="4513"/>
    <lineage>
        <taxon>Eukaryota</taxon>
        <taxon>Viridiplantae</taxon>
        <taxon>Streptophyta</taxon>
        <taxon>Embryophyta</taxon>
        <taxon>Tracheophyta</taxon>
        <taxon>Spermatophyta</taxon>
        <taxon>Magnoliopsida</taxon>
        <taxon>Liliopsida</taxon>
        <taxon>Poales</taxon>
        <taxon>Poaceae</taxon>
        <taxon>BOP clade</taxon>
        <taxon>Pooideae</taxon>
        <taxon>Triticodae</taxon>
        <taxon>Triticeae</taxon>
        <taxon>Hordeinae</taxon>
        <taxon>Hordeum</taxon>
    </lineage>
</organism>
<name>BAS1_HORVU</name>
<dbReference type="EC" id="1.11.1.24" evidence="3"/>
<dbReference type="EMBL" id="Z34917">
    <property type="protein sequence ID" value="CAA84396.1"/>
    <property type="molecule type" value="mRNA"/>
</dbReference>
<dbReference type="SMR" id="Q96468"/>
<dbReference type="ExpressionAtlas" id="Q96468">
    <property type="expression patterns" value="baseline and differential"/>
</dbReference>
<dbReference type="GO" id="GO:0009507">
    <property type="term" value="C:chloroplast"/>
    <property type="evidence" value="ECO:0007669"/>
    <property type="project" value="UniProtKB-SubCell"/>
</dbReference>
<dbReference type="GO" id="GO:0008379">
    <property type="term" value="F:thioredoxin peroxidase activity"/>
    <property type="evidence" value="ECO:0007669"/>
    <property type="project" value="TreeGrafter"/>
</dbReference>
<dbReference type="GO" id="GO:0045454">
    <property type="term" value="P:cell redox homeostasis"/>
    <property type="evidence" value="ECO:0007669"/>
    <property type="project" value="TreeGrafter"/>
</dbReference>
<dbReference type="GO" id="GO:0033554">
    <property type="term" value="P:cellular response to stress"/>
    <property type="evidence" value="ECO:0007669"/>
    <property type="project" value="TreeGrafter"/>
</dbReference>
<dbReference type="GO" id="GO:0042744">
    <property type="term" value="P:hydrogen peroxide catabolic process"/>
    <property type="evidence" value="ECO:0007669"/>
    <property type="project" value="TreeGrafter"/>
</dbReference>
<dbReference type="GO" id="GO:0006979">
    <property type="term" value="P:response to oxidative stress"/>
    <property type="evidence" value="ECO:0007669"/>
    <property type="project" value="TreeGrafter"/>
</dbReference>
<dbReference type="CDD" id="cd03015">
    <property type="entry name" value="PRX_Typ2cys"/>
    <property type="match status" value="1"/>
</dbReference>
<dbReference type="FunFam" id="3.40.30.10:FF:000063">
    <property type="entry name" value="2-Cys peroxiredoxin BAS1, chloroplastic"/>
    <property type="match status" value="1"/>
</dbReference>
<dbReference type="Gene3D" id="3.40.30.10">
    <property type="entry name" value="Glutaredoxin"/>
    <property type="match status" value="1"/>
</dbReference>
<dbReference type="InterPro" id="IPR000866">
    <property type="entry name" value="AhpC/TSA"/>
</dbReference>
<dbReference type="InterPro" id="IPR050217">
    <property type="entry name" value="Peroxiredoxin"/>
</dbReference>
<dbReference type="InterPro" id="IPR024706">
    <property type="entry name" value="Peroxiredoxin_AhpC-typ"/>
</dbReference>
<dbReference type="InterPro" id="IPR019479">
    <property type="entry name" value="Peroxiredoxin_C"/>
</dbReference>
<dbReference type="InterPro" id="IPR036249">
    <property type="entry name" value="Thioredoxin-like_sf"/>
</dbReference>
<dbReference type="InterPro" id="IPR013766">
    <property type="entry name" value="Thioredoxin_domain"/>
</dbReference>
<dbReference type="PANTHER" id="PTHR10681">
    <property type="entry name" value="THIOREDOXIN PEROXIDASE"/>
    <property type="match status" value="1"/>
</dbReference>
<dbReference type="PANTHER" id="PTHR10681:SF152">
    <property type="entry name" value="THIOREDOXIN-DEPENDENT PEROXIREDOXIN"/>
    <property type="match status" value="1"/>
</dbReference>
<dbReference type="Pfam" id="PF10417">
    <property type="entry name" value="1-cysPrx_C"/>
    <property type="match status" value="1"/>
</dbReference>
<dbReference type="Pfam" id="PF00578">
    <property type="entry name" value="AhpC-TSA"/>
    <property type="match status" value="1"/>
</dbReference>
<dbReference type="PIRSF" id="PIRSF000239">
    <property type="entry name" value="AHPC"/>
    <property type="match status" value="1"/>
</dbReference>
<dbReference type="SUPFAM" id="SSF52833">
    <property type="entry name" value="Thioredoxin-like"/>
    <property type="match status" value="1"/>
</dbReference>
<dbReference type="PROSITE" id="PS51352">
    <property type="entry name" value="THIOREDOXIN_2"/>
    <property type="match status" value="1"/>
</dbReference>
<sequence length="210" mass="23299">DARARSFVARAAAEYDLPLVGNKAPDFAAEAVFDQEFINVKLSDYIGKKYVILFFYPLDFTFVCPTEITAFSDRHEEFEKINTEILGVSVDSVFSHLAWVQTERKSGGLGDLKYPLVSDVTKSISKSFGVLIPDQGIALRGLFIIDKEGVIQHSTINNLGIGRSVDETLRTLQALQYVKKPDEVCPAGWKPGEKSMKPDPKGSKEYFAAI</sequence>
<proteinExistence type="evidence at transcript level"/>